<accession>P20633</accession>
<name>YTSF_SPICI</name>
<dbReference type="EMBL" id="AF012877">
    <property type="protein sequence ID" value="AAB69996.1"/>
    <property type="molecule type" value="Genomic_DNA"/>
</dbReference>
<dbReference type="PIR" id="C35270">
    <property type="entry name" value="C35270"/>
</dbReference>
<dbReference type="RefSeq" id="WP_071937536.1">
    <property type="nucleotide sequence ID" value="NZ_CP013197.1"/>
</dbReference>
<dbReference type="SMR" id="P20633"/>
<dbReference type="STRING" id="2133.SCITRI_001130"/>
<dbReference type="GeneID" id="54238991"/>
<dbReference type="OrthoDB" id="389083at2"/>
<organism>
    <name type="scientific">Spiroplasma citri</name>
    <dbReference type="NCBI Taxonomy" id="2133"/>
    <lineage>
        <taxon>Bacteria</taxon>
        <taxon>Bacillati</taxon>
        <taxon>Mycoplasmatota</taxon>
        <taxon>Mollicutes</taxon>
        <taxon>Entomoplasmatales</taxon>
        <taxon>Spiroplasmataceae</taxon>
        <taxon>Spiroplasma</taxon>
    </lineage>
</organism>
<evidence type="ECO:0000256" key="1">
    <source>
        <dbReference type="SAM" id="MobiDB-lite"/>
    </source>
</evidence>
<sequence>MENTEKGTIIAISMAAFLFVVVSLSIIGYLISFTKREFKPRFINKKILIILFTVLGINLPIVILGFLFQFVINLSSTAPLIIMIVLAFGLTVGVGIYIFLFLQLIAVGIDEKEIAFLGERILIRKITRVERNDKTNQLVIYYIEGSRSKKKCRFSLASQAGQFMFNNVNLLNQEIMPFVDGQAEPELKVSEQENSEAPVSEPKEDEKTKKD</sequence>
<proteinExistence type="predicted"/>
<feature type="chain" id="PRO_0000066535" description="Uncharacterized 23.8 kDa protein in tsf 3'region">
    <location>
        <begin position="1"/>
        <end position="211"/>
    </location>
</feature>
<feature type="region of interest" description="Disordered" evidence="1">
    <location>
        <begin position="187"/>
        <end position="211"/>
    </location>
</feature>
<feature type="compositionally biased region" description="Basic and acidic residues" evidence="1">
    <location>
        <begin position="201"/>
        <end position="211"/>
    </location>
</feature>
<protein>
    <recommendedName>
        <fullName>Uncharacterized 23.8 kDa protein in tsf 3'region</fullName>
    </recommendedName>
    <alternativeName>
        <fullName>Protein X</fullName>
    </alternativeName>
</protein>
<reference key="1">
    <citation type="journal article" date="1990" name="J. Bacteriol.">
        <title>Organization and nucleotide sequences of the Spiroplasma citri genes for ribosomal protein S2, elongation factor Ts, spiralin, phosphofructokinase, pyruvate kinase, and an unidentified protein.</title>
        <authorList>
            <person name="Chevalier C."/>
            <person name="Saillard C."/>
            <person name="Bove J.M."/>
        </authorList>
    </citation>
    <scope>NUCLEOTIDE SEQUENCE [GENOMIC DNA]</scope>
    <source>
        <strain>ATCC 27556 / NCPPB 2647 / R8A2</strain>
    </source>
</reference>
<reference key="2">
    <citation type="journal article" date="1998" name="Curr. Microbiol.">
        <title>Gene organization and transcriptional analysis of the Spiroplasma citri rpsB/tsf/x operon.</title>
        <authorList>
            <person name="Le Dantec L."/>
            <person name="Bove J.M."/>
            <person name="Saillard C."/>
        </authorList>
    </citation>
    <scope>NUCLEOTIDE SEQUENCE [GENOMIC DNA]</scope>
    <source>
        <strain>ATCC 27556 / NCPPB 2647 / R8A2</strain>
    </source>
</reference>